<comment type="function">
    <text evidence="1">May be involved in signal transduction as a component of a multimeric receptor complex.</text>
</comment>
<comment type="subcellular location">
    <subcellularLocation>
        <location evidence="4">Membrane</location>
        <topology evidence="4">Multi-pass membrane protein</topology>
    </subcellularLocation>
</comment>
<comment type="alternative products">
    <event type="alternative splicing"/>
    <isoform>
        <id>Q5FWC3-1</id>
        <name>1</name>
        <sequence type="displayed"/>
    </isoform>
    <isoform>
        <id>Q5FWC3-2</id>
        <name>2</name>
        <sequence type="described" ref="VSP_030478"/>
    </isoform>
</comment>
<comment type="similarity">
    <text evidence="4">Belongs to the MS4A family.</text>
</comment>
<comment type="caution">
    <text evidence="4">It is uncertain whether Met-1 or Met-22 is the initiator.</text>
</comment>
<sequence>MECRNPKVSSANITVLGVIQIMIGIYHVLMWYFLLLLYMGQIKGVFGTYEPVTYKMGTSLWGFAFVISGAFTVKAAKYQSRHMILCTMSLNILCIIITIVAASLTIVELSHFRSVSYRNYGQAKLGREVSRVLLCSYPLEFAIALLYSISSCAYLPLSSIVKSLVRKTWRLSSLAAWRQMIWLEAGNQEETLESVTEVVEGNS</sequence>
<organism>
    <name type="scientific">Mus musculus</name>
    <name type="common">Mouse</name>
    <dbReference type="NCBI Taxonomy" id="10090"/>
    <lineage>
        <taxon>Eukaryota</taxon>
        <taxon>Metazoa</taxon>
        <taxon>Chordata</taxon>
        <taxon>Craniata</taxon>
        <taxon>Vertebrata</taxon>
        <taxon>Euteleostomi</taxon>
        <taxon>Mammalia</taxon>
        <taxon>Eutheria</taxon>
        <taxon>Euarchontoglires</taxon>
        <taxon>Glires</taxon>
        <taxon>Rodentia</taxon>
        <taxon>Myomorpha</taxon>
        <taxon>Muroidea</taxon>
        <taxon>Muridae</taxon>
        <taxon>Murinae</taxon>
        <taxon>Mus</taxon>
        <taxon>Mus</taxon>
    </lineage>
</organism>
<dbReference type="EMBL" id="AF544402">
    <property type="protein sequence ID" value="AAQ11744.1"/>
    <property type="molecule type" value="mRNA"/>
</dbReference>
<dbReference type="EMBL" id="BC089483">
    <property type="protein sequence ID" value="AAH89483.1"/>
    <property type="molecule type" value="mRNA"/>
</dbReference>
<dbReference type="CCDS" id="CCDS29595.1">
    <molecule id="Q5FWC3-1"/>
</dbReference>
<dbReference type="CCDS" id="CCDS84420.1">
    <molecule id="Q5FWC3-2"/>
</dbReference>
<dbReference type="RefSeq" id="NP_001334364.1">
    <molecule id="Q5FWC3-2"/>
    <property type="nucleotide sequence ID" value="NM_001347435.1"/>
</dbReference>
<dbReference type="RefSeq" id="NP_937867.2">
    <molecule id="Q5FWC3-1"/>
    <property type="nucleotide sequence ID" value="NM_198224.3"/>
</dbReference>
<dbReference type="SMR" id="Q5FWC3"/>
<dbReference type="FunCoup" id="Q5FWC3">
    <property type="interactions" value="470"/>
</dbReference>
<dbReference type="STRING" id="10090.ENSMUSP00000073095"/>
<dbReference type="PaxDb" id="10090-ENSMUSP00000073095"/>
<dbReference type="ProteomicsDB" id="295753">
    <molecule id="Q5FWC3-1"/>
</dbReference>
<dbReference type="ProteomicsDB" id="295754">
    <molecule id="Q5FWC3-2"/>
</dbReference>
<dbReference type="Antibodypedia" id="50523">
    <property type="antibodies" value="57 antibodies from 12 providers"/>
</dbReference>
<dbReference type="DNASU" id="73466"/>
<dbReference type="Ensembl" id="ENSMUST00000073380.13">
    <molecule id="Q5FWC3-1"/>
    <property type="protein sequence ID" value="ENSMUSP00000073095.7"/>
    <property type="gene ID" value="ENSMUSG00000057240.15"/>
</dbReference>
<dbReference type="Ensembl" id="ENSMUST00000188464.2">
    <molecule id="Q5FWC3-2"/>
    <property type="protein sequence ID" value="ENSMUSP00000140293.2"/>
    <property type="gene ID" value="ENSMUSG00000057240.15"/>
</dbReference>
<dbReference type="GeneID" id="73466"/>
<dbReference type="KEGG" id="mmu:73466"/>
<dbReference type="UCSC" id="uc008gru.1">
    <molecule id="Q5FWC3-1"/>
    <property type="organism name" value="mouse"/>
</dbReference>
<dbReference type="UCSC" id="uc008grv.1">
    <molecule id="Q5FWC3-2"/>
    <property type="organism name" value="mouse"/>
</dbReference>
<dbReference type="AGR" id="MGI:1920716"/>
<dbReference type="CTD" id="503497"/>
<dbReference type="MGI" id="MGI:1920716">
    <property type="gene designation" value="Ms4a13"/>
</dbReference>
<dbReference type="VEuPathDB" id="HostDB:ENSMUSG00000057240"/>
<dbReference type="eggNOG" id="ENOG502RTZG">
    <property type="taxonomic scope" value="Eukaryota"/>
</dbReference>
<dbReference type="GeneTree" id="ENSGT00390000015662"/>
<dbReference type="HOGENOM" id="CLU_1348559_0_0_1"/>
<dbReference type="InParanoid" id="Q5FWC3"/>
<dbReference type="OMA" id="MIWLEAG"/>
<dbReference type="OrthoDB" id="9451513at2759"/>
<dbReference type="PhylomeDB" id="Q5FWC3"/>
<dbReference type="TreeFam" id="TF353242"/>
<dbReference type="BioGRID-ORCS" id="73466">
    <property type="hits" value="3 hits in 76 CRISPR screens"/>
</dbReference>
<dbReference type="ChiTaRS" id="Ms4a13">
    <property type="organism name" value="mouse"/>
</dbReference>
<dbReference type="PRO" id="PR:Q5FWC3"/>
<dbReference type="Proteomes" id="UP000000589">
    <property type="component" value="Chromosome 19"/>
</dbReference>
<dbReference type="RNAct" id="Q5FWC3">
    <property type="molecule type" value="protein"/>
</dbReference>
<dbReference type="Bgee" id="ENSMUSG00000057240">
    <property type="expression patterns" value="Expressed in spermatid and 7 other cell types or tissues"/>
</dbReference>
<dbReference type="GO" id="GO:0016020">
    <property type="term" value="C:membrane"/>
    <property type="evidence" value="ECO:0007669"/>
    <property type="project" value="UniProtKB-SubCell"/>
</dbReference>
<dbReference type="InterPro" id="IPR007237">
    <property type="entry name" value="CD20-like"/>
</dbReference>
<dbReference type="InterPro" id="IPR030417">
    <property type="entry name" value="MS4A"/>
</dbReference>
<dbReference type="PANTHER" id="PTHR23320:SF42">
    <property type="entry name" value="MEMBRANE-SPANNING 4-DOMAINS SUBFAMILY A MEMBER 13"/>
    <property type="match status" value="1"/>
</dbReference>
<dbReference type="PANTHER" id="PTHR23320">
    <property type="entry name" value="MEMBRANE-SPANNING 4-DOMAINS SUBFAMILY A MS4A -RELATED"/>
    <property type="match status" value="1"/>
</dbReference>
<dbReference type="Pfam" id="PF04103">
    <property type="entry name" value="CD20"/>
    <property type="match status" value="1"/>
</dbReference>
<feature type="chain" id="PRO_0000315056" description="Membrane-spanning 4-domains subfamily A member 13">
    <location>
        <begin position="1"/>
        <end position="203"/>
    </location>
</feature>
<feature type="transmembrane region" description="Helical" evidence="2">
    <location>
        <begin position="15"/>
        <end position="35"/>
    </location>
</feature>
<feature type="transmembrane region" description="Helical" evidence="2">
    <location>
        <begin position="56"/>
        <end position="76"/>
    </location>
</feature>
<feature type="transmembrane region" description="Helical" evidence="2">
    <location>
        <begin position="84"/>
        <end position="104"/>
    </location>
</feature>
<feature type="transmembrane region" description="Helical" evidence="2">
    <location>
        <begin position="141"/>
        <end position="161"/>
    </location>
</feature>
<feature type="splice variant" id="VSP_030478" description="In isoform 2." evidence="3">
    <location>
        <begin position="156"/>
        <end position="184"/>
    </location>
</feature>
<reference key="1">
    <citation type="submission" date="2002-09" db="EMBL/GenBank/DDBJ databases">
        <title>Isolation and characterisation of two novel mouse four-transmembrane genes expressed specifically in the testis.</title>
        <authorList>
            <person name="Hulett M.D."/>
            <person name="Hornby J.R."/>
            <person name="Halliday D.C.T."/>
        </authorList>
    </citation>
    <scope>NUCLEOTIDE SEQUENCE [MRNA] (ISOFORM 2)</scope>
    <source>
        <strain>C57BL/6J</strain>
        <tissue>Testis</tissue>
    </source>
</reference>
<reference key="2">
    <citation type="journal article" date="2004" name="Genome Res.">
        <title>The status, quality, and expansion of the NIH full-length cDNA project: the Mammalian Gene Collection (MGC).</title>
        <authorList>
            <consortium name="The MGC Project Team"/>
        </authorList>
    </citation>
    <scope>NUCLEOTIDE SEQUENCE [LARGE SCALE MRNA] (ISOFORM 1)</scope>
    <source>
        <tissue>Testis</tissue>
    </source>
</reference>
<accession>Q5FWC3</accession>
<accession>Q717T1</accession>
<proteinExistence type="evidence at transcript level"/>
<protein>
    <recommendedName>
        <fullName>Membrane-spanning 4-domains subfamily A member 13</fullName>
    </recommendedName>
    <alternativeName>
        <fullName>Testis-expressed transmembrane protein 4.2</fullName>
        <shortName>Tetm4.2</shortName>
    </alternativeName>
</protein>
<name>M4A13_MOUSE</name>
<evidence type="ECO:0000250" key="1"/>
<evidence type="ECO:0000255" key="2"/>
<evidence type="ECO:0000303" key="3">
    <source ref="1"/>
</evidence>
<evidence type="ECO:0000305" key="4"/>
<keyword id="KW-0025">Alternative splicing</keyword>
<keyword id="KW-0472">Membrane</keyword>
<keyword id="KW-0675">Receptor</keyword>
<keyword id="KW-1185">Reference proteome</keyword>
<keyword id="KW-0812">Transmembrane</keyword>
<keyword id="KW-1133">Transmembrane helix</keyword>
<gene>
    <name type="primary">Ms4a13</name>
</gene>